<dbReference type="EC" id="3.1.11.6" evidence="1"/>
<dbReference type="EMBL" id="CP000733">
    <property type="protein sequence ID" value="ABS77806.1"/>
    <property type="molecule type" value="Genomic_DNA"/>
</dbReference>
<dbReference type="RefSeq" id="WP_005771337.1">
    <property type="nucleotide sequence ID" value="NC_009727.1"/>
</dbReference>
<dbReference type="SMR" id="A9KEC8"/>
<dbReference type="KEGG" id="cbd:CBUD_1610"/>
<dbReference type="HOGENOM" id="CLU_145918_3_3_6"/>
<dbReference type="Proteomes" id="UP000008555">
    <property type="component" value="Chromosome"/>
</dbReference>
<dbReference type="GO" id="GO:0005829">
    <property type="term" value="C:cytosol"/>
    <property type="evidence" value="ECO:0007669"/>
    <property type="project" value="TreeGrafter"/>
</dbReference>
<dbReference type="GO" id="GO:0009318">
    <property type="term" value="C:exodeoxyribonuclease VII complex"/>
    <property type="evidence" value="ECO:0007669"/>
    <property type="project" value="InterPro"/>
</dbReference>
<dbReference type="GO" id="GO:0008855">
    <property type="term" value="F:exodeoxyribonuclease VII activity"/>
    <property type="evidence" value="ECO:0007669"/>
    <property type="project" value="UniProtKB-UniRule"/>
</dbReference>
<dbReference type="GO" id="GO:0006308">
    <property type="term" value="P:DNA catabolic process"/>
    <property type="evidence" value="ECO:0007669"/>
    <property type="project" value="UniProtKB-UniRule"/>
</dbReference>
<dbReference type="Gene3D" id="1.10.287.1040">
    <property type="entry name" value="Exonuclease VII, small subunit"/>
    <property type="match status" value="1"/>
</dbReference>
<dbReference type="HAMAP" id="MF_00337">
    <property type="entry name" value="Exonuc_7_S"/>
    <property type="match status" value="1"/>
</dbReference>
<dbReference type="InterPro" id="IPR003761">
    <property type="entry name" value="Exonuc_VII_S"/>
</dbReference>
<dbReference type="InterPro" id="IPR037004">
    <property type="entry name" value="Exonuc_VII_ssu_sf"/>
</dbReference>
<dbReference type="NCBIfam" id="NF002140">
    <property type="entry name" value="PRK00977.1-4"/>
    <property type="match status" value="1"/>
</dbReference>
<dbReference type="NCBIfam" id="TIGR01280">
    <property type="entry name" value="xseB"/>
    <property type="match status" value="1"/>
</dbReference>
<dbReference type="PANTHER" id="PTHR34137">
    <property type="entry name" value="EXODEOXYRIBONUCLEASE 7 SMALL SUBUNIT"/>
    <property type="match status" value="1"/>
</dbReference>
<dbReference type="PANTHER" id="PTHR34137:SF1">
    <property type="entry name" value="EXODEOXYRIBONUCLEASE 7 SMALL SUBUNIT"/>
    <property type="match status" value="1"/>
</dbReference>
<dbReference type="Pfam" id="PF02609">
    <property type="entry name" value="Exonuc_VII_S"/>
    <property type="match status" value="1"/>
</dbReference>
<dbReference type="PIRSF" id="PIRSF006488">
    <property type="entry name" value="Exonuc_VII_S"/>
    <property type="match status" value="1"/>
</dbReference>
<dbReference type="SUPFAM" id="SSF116842">
    <property type="entry name" value="XseB-like"/>
    <property type="match status" value="1"/>
</dbReference>
<feature type="chain" id="PRO_1000079282" description="Exodeoxyribonuclease 7 small subunit">
    <location>
        <begin position="1"/>
        <end position="82"/>
    </location>
</feature>
<evidence type="ECO:0000255" key="1">
    <source>
        <dbReference type="HAMAP-Rule" id="MF_00337"/>
    </source>
</evidence>
<keyword id="KW-0963">Cytoplasm</keyword>
<keyword id="KW-0269">Exonuclease</keyword>
<keyword id="KW-0378">Hydrolase</keyword>
<keyword id="KW-0540">Nuclease</keyword>
<proteinExistence type="inferred from homology"/>
<comment type="function">
    <text evidence="1">Bidirectionally degrades single-stranded DNA into large acid-insoluble oligonucleotides, which are then degraded further into small acid-soluble oligonucleotides.</text>
</comment>
<comment type="catalytic activity">
    <reaction evidence="1">
        <text>Exonucleolytic cleavage in either 5'- to 3'- or 3'- to 5'-direction to yield nucleoside 5'-phosphates.</text>
        <dbReference type="EC" id="3.1.11.6"/>
    </reaction>
</comment>
<comment type="subunit">
    <text evidence="1">Heterooligomer composed of large and small subunits.</text>
</comment>
<comment type="subcellular location">
    <subcellularLocation>
        <location evidence="1">Cytoplasm</location>
    </subcellularLocation>
</comment>
<comment type="similarity">
    <text evidence="1">Belongs to the XseB family.</text>
</comment>
<reference key="1">
    <citation type="journal article" date="2009" name="Infect. Immun.">
        <title>Comparative genomics reveal extensive transposon-mediated genomic plasticity and diversity among potential effector proteins within the genus Coxiella.</title>
        <authorList>
            <person name="Beare P.A."/>
            <person name="Unsworth N."/>
            <person name="Andoh M."/>
            <person name="Voth D.E."/>
            <person name="Omsland A."/>
            <person name="Gilk S.D."/>
            <person name="Williams K.P."/>
            <person name="Sobral B.W."/>
            <person name="Kupko J.J. III"/>
            <person name="Porcella S.F."/>
            <person name="Samuel J.E."/>
            <person name="Heinzen R.A."/>
        </authorList>
    </citation>
    <scope>NUCLEOTIDE SEQUENCE [LARGE SCALE GENOMIC DNA]</scope>
    <source>
        <strain>Dugway 5J108-111</strain>
    </source>
</reference>
<gene>
    <name evidence="1" type="primary">xseB</name>
    <name type="ordered locus">CBUD_1610</name>
</gene>
<sequence length="82" mass="9226">MPRKKTENFNFEASLNELTALVEKLEQGDLTLEESLQNFERGVGLVRSCQQALSDAEQKVKVLINQDGAETLVPFELETKTD</sequence>
<protein>
    <recommendedName>
        <fullName evidence="1">Exodeoxyribonuclease 7 small subunit</fullName>
        <ecNumber evidence="1">3.1.11.6</ecNumber>
    </recommendedName>
    <alternativeName>
        <fullName evidence="1">Exodeoxyribonuclease VII small subunit</fullName>
        <shortName evidence="1">Exonuclease VII small subunit</shortName>
    </alternativeName>
</protein>
<organism>
    <name type="scientific">Coxiella burnetii (strain Dugway 5J108-111)</name>
    <dbReference type="NCBI Taxonomy" id="434922"/>
    <lineage>
        <taxon>Bacteria</taxon>
        <taxon>Pseudomonadati</taxon>
        <taxon>Pseudomonadota</taxon>
        <taxon>Gammaproteobacteria</taxon>
        <taxon>Legionellales</taxon>
        <taxon>Coxiellaceae</taxon>
        <taxon>Coxiella</taxon>
    </lineage>
</organism>
<name>EX7S_COXBN</name>
<accession>A9KEC8</accession>